<comment type="function">
    <text evidence="1">Catalytic component of the COMPASS (Set1C) complex that specifically mono-, di- and trimethylates histone H3 to form H3K4me1/2/3. Binds RNAs which might negatively affect its histone methyltransferase activity. COMPASS recognizes ubiquitinated H2B on one face of the nucleosome which stimulates the methylation of H3 on the opposing face.</text>
</comment>
<comment type="catalytic activity">
    <reaction evidence="1">
        <text>L-lysyl(4)-[histone H3] + 3 S-adenosyl-L-methionine = N(6),N(6),N(6)-trimethyl-L-lysyl(4)-[histone H3] + 3 S-adenosyl-L-homocysteine + 3 H(+)</text>
        <dbReference type="Rhea" id="RHEA:60260"/>
        <dbReference type="Rhea" id="RHEA-COMP:15537"/>
        <dbReference type="Rhea" id="RHEA-COMP:15547"/>
        <dbReference type="ChEBI" id="CHEBI:15378"/>
        <dbReference type="ChEBI" id="CHEBI:29969"/>
        <dbReference type="ChEBI" id="CHEBI:57856"/>
        <dbReference type="ChEBI" id="CHEBI:59789"/>
        <dbReference type="ChEBI" id="CHEBI:61961"/>
        <dbReference type="EC" id="2.1.1.354"/>
    </reaction>
</comment>
<comment type="catalytic activity">
    <reaction evidence="1">
        <text>N(6)-methyl-L-lysyl(4)-[histone H3] + S-adenosyl-L-methionine = N(6),N(6)-dimethyl-L-lysyl(4)-[histone H3] + S-adenosyl-L-homocysteine + H(+)</text>
        <dbReference type="Rhea" id="RHEA:60268"/>
        <dbReference type="Rhea" id="RHEA-COMP:15540"/>
        <dbReference type="Rhea" id="RHEA-COMP:15543"/>
        <dbReference type="ChEBI" id="CHEBI:15378"/>
        <dbReference type="ChEBI" id="CHEBI:57856"/>
        <dbReference type="ChEBI" id="CHEBI:59789"/>
        <dbReference type="ChEBI" id="CHEBI:61929"/>
        <dbReference type="ChEBI" id="CHEBI:61976"/>
    </reaction>
</comment>
<comment type="catalytic activity">
    <reaction evidence="1">
        <text>N(6),N(6)-dimethyl-L-lysyl(4)-[histone H3] + S-adenosyl-L-methionine = N(6),N(6),N(6)-trimethyl-L-lysyl(4)-[histone H3] + S-adenosyl-L-homocysteine + H(+)</text>
        <dbReference type="Rhea" id="RHEA:60272"/>
        <dbReference type="Rhea" id="RHEA-COMP:15537"/>
        <dbReference type="Rhea" id="RHEA-COMP:15540"/>
        <dbReference type="ChEBI" id="CHEBI:15378"/>
        <dbReference type="ChEBI" id="CHEBI:57856"/>
        <dbReference type="ChEBI" id="CHEBI:59789"/>
        <dbReference type="ChEBI" id="CHEBI:61961"/>
        <dbReference type="ChEBI" id="CHEBI:61976"/>
    </reaction>
</comment>
<comment type="subunit">
    <text evidence="1">Component of the Set1C/COMPASS complex.</text>
</comment>
<comment type="subcellular location">
    <subcellularLocation>
        <location evidence="5">Nucleus</location>
    </subcellularLocation>
    <subcellularLocation>
        <location evidence="5">Chromosome</location>
    </subcellularLocation>
</comment>
<comment type="domain">
    <text evidence="1">The RxxxRR motif forms an adapter helix that bridges the nucleosome and ubiquitin.</text>
</comment>
<comment type="similarity">
    <text evidence="3">Belongs to the class V-like SAM-binding methyltransferase superfamily.</text>
</comment>
<dbReference type="EC" id="2.1.1.354" evidence="1"/>
<dbReference type="EMBL" id="AACD01000098">
    <property type="protein sequence ID" value="EAA62888.1"/>
    <property type="molecule type" value="Genomic_DNA"/>
</dbReference>
<dbReference type="EMBL" id="BN001305">
    <property type="protein sequence ID" value="CBF81174.1"/>
    <property type="molecule type" value="Genomic_DNA"/>
</dbReference>
<dbReference type="RefSeq" id="XP_663399.1">
    <property type="nucleotide sequence ID" value="XM_658307.1"/>
</dbReference>
<dbReference type="SMR" id="Q5B0Y5"/>
<dbReference type="STRING" id="227321.Q5B0Y5"/>
<dbReference type="EnsemblFungi" id="CBF81174">
    <property type="protein sequence ID" value="CBF81174"/>
    <property type="gene ID" value="ANIA_05795"/>
</dbReference>
<dbReference type="KEGG" id="ani:ANIA_05795"/>
<dbReference type="VEuPathDB" id="FungiDB:AN5795"/>
<dbReference type="eggNOG" id="KOG1080">
    <property type="taxonomic scope" value="Eukaryota"/>
</dbReference>
<dbReference type="HOGENOM" id="CLU_004391_1_0_1"/>
<dbReference type="InParanoid" id="Q5B0Y5"/>
<dbReference type="OMA" id="CHMTALF"/>
<dbReference type="OrthoDB" id="308383at2759"/>
<dbReference type="Proteomes" id="UP000000560">
    <property type="component" value="Chromosome V"/>
</dbReference>
<dbReference type="GO" id="GO:0005694">
    <property type="term" value="C:chromosome"/>
    <property type="evidence" value="ECO:0007669"/>
    <property type="project" value="UniProtKB-SubCell"/>
</dbReference>
<dbReference type="GO" id="GO:0048188">
    <property type="term" value="C:Set1C/COMPASS complex"/>
    <property type="evidence" value="ECO:0000250"/>
    <property type="project" value="UniProtKB"/>
</dbReference>
<dbReference type="GO" id="GO:0042800">
    <property type="term" value="F:histone H3K4 methyltransferase activity"/>
    <property type="evidence" value="ECO:0000318"/>
    <property type="project" value="GO_Central"/>
</dbReference>
<dbReference type="GO" id="GO:0140999">
    <property type="term" value="F:histone H3K4 trimethyltransferase activity"/>
    <property type="evidence" value="ECO:0007669"/>
    <property type="project" value="UniProtKB-EC"/>
</dbReference>
<dbReference type="GO" id="GO:0003723">
    <property type="term" value="F:RNA binding"/>
    <property type="evidence" value="ECO:0000250"/>
    <property type="project" value="UniProtKB"/>
</dbReference>
<dbReference type="GO" id="GO:0032259">
    <property type="term" value="P:methylation"/>
    <property type="evidence" value="ECO:0007669"/>
    <property type="project" value="UniProtKB-KW"/>
</dbReference>
<dbReference type="CDD" id="cd12302">
    <property type="entry name" value="RRM_scSet1p_like"/>
    <property type="match status" value="1"/>
</dbReference>
<dbReference type="CDD" id="cd20072">
    <property type="entry name" value="SET_SET1"/>
    <property type="match status" value="1"/>
</dbReference>
<dbReference type="Gene3D" id="3.30.70.330">
    <property type="match status" value="1"/>
</dbReference>
<dbReference type="Gene3D" id="2.170.270.10">
    <property type="entry name" value="SET domain"/>
    <property type="match status" value="1"/>
</dbReference>
<dbReference type="InterPro" id="IPR024657">
    <property type="entry name" value="COMPASS_Set1_N-SET"/>
</dbReference>
<dbReference type="InterPro" id="IPR012677">
    <property type="entry name" value="Nucleotide-bd_a/b_plait_sf"/>
</dbReference>
<dbReference type="InterPro" id="IPR003616">
    <property type="entry name" value="Post-SET_dom"/>
</dbReference>
<dbReference type="InterPro" id="IPR035979">
    <property type="entry name" value="RBD_domain_sf"/>
</dbReference>
<dbReference type="InterPro" id="IPR044570">
    <property type="entry name" value="Set1-like"/>
</dbReference>
<dbReference type="InterPro" id="IPR017111">
    <property type="entry name" value="Set1_fungi"/>
</dbReference>
<dbReference type="InterPro" id="IPR024636">
    <property type="entry name" value="SET_assoc"/>
</dbReference>
<dbReference type="InterPro" id="IPR001214">
    <property type="entry name" value="SET_dom"/>
</dbReference>
<dbReference type="InterPro" id="IPR046341">
    <property type="entry name" value="SET_dom_sf"/>
</dbReference>
<dbReference type="PANTHER" id="PTHR45814">
    <property type="entry name" value="HISTONE-LYSINE N-METHYLTRANSFERASE SETD1"/>
    <property type="match status" value="1"/>
</dbReference>
<dbReference type="PANTHER" id="PTHR45814:SF2">
    <property type="entry name" value="HISTONE-LYSINE N-METHYLTRANSFERASE SETD1"/>
    <property type="match status" value="1"/>
</dbReference>
<dbReference type="Pfam" id="PF11764">
    <property type="entry name" value="N-SET"/>
    <property type="match status" value="1"/>
</dbReference>
<dbReference type="Pfam" id="PF00856">
    <property type="entry name" value="SET"/>
    <property type="match status" value="1"/>
</dbReference>
<dbReference type="Pfam" id="PF11767">
    <property type="entry name" value="SET_assoc"/>
    <property type="match status" value="1"/>
</dbReference>
<dbReference type="PIRSF" id="PIRSF037104">
    <property type="entry name" value="Histone_H3-K4_mtfrase_Set1_fun"/>
    <property type="match status" value="1"/>
</dbReference>
<dbReference type="SMART" id="SM01291">
    <property type="entry name" value="N-SET"/>
    <property type="match status" value="1"/>
</dbReference>
<dbReference type="SMART" id="SM00508">
    <property type="entry name" value="PostSET"/>
    <property type="match status" value="1"/>
</dbReference>
<dbReference type="SMART" id="SM00317">
    <property type="entry name" value="SET"/>
    <property type="match status" value="1"/>
</dbReference>
<dbReference type="SUPFAM" id="SSF54928">
    <property type="entry name" value="RNA-binding domain, RBD"/>
    <property type="match status" value="1"/>
</dbReference>
<dbReference type="SUPFAM" id="SSF82199">
    <property type="entry name" value="SET domain"/>
    <property type="match status" value="1"/>
</dbReference>
<dbReference type="PROSITE" id="PS50868">
    <property type="entry name" value="POST_SET"/>
    <property type="match status" value="1"/>
</dbReference>
<dbReference type="PROSITE" id="PS51572">
    <property type="entry name" value="SAM_MT43_1"/>
    <property type="match status" value="1"/>
</dbReference>
<dbReference type="PROSITE" id="PS50280">
    <property type="entry name" value="SET"/>
    <property type="match status" value="1"/>
</dbReference>
<feature type="chain" id="PRO_0000269773" description="Histone-lysine N-methyltransferase, H3 lysine-4 specific">
    <location>
        <begin position="1"/>
        <end position="1220"/>
    </location>
</feature>
<feature type="domain" description="SET" evidence="3">
    <location>
        <begin position="1078"/>
        <end position="1195"/>
    </location>
</feature>
<feature type="domain" description="Post-SET" evidence="2">
    <location>
        <begin position="1204"/>
        <end position="1220"/>
    </location>
</feature>
<feature type="region of interest" description="Disordered" evidence="4">
    <location>
        <begin position="1"/>
        <end position="147"/>
    </location>
</feature>
<feature type="region of interest" description="Disordered" evidence="4">
    <location>
        <begin position="179"/>
        <end position="198"/>
    </location>
</feature>
<feature type="region of interest" description="Disordered" evidence="4">
    <location>
        <begin position="374"/>
        <end position="416"/>
    </location>
</feature>
<feature type="region of interest" description="Disordered" evidence="4">
    <location>
        <begin position="516"/>
        <end position="542"/>
    </location>
</feature>
<feature type="region of interest" description="Disordered" evidence="4">
    <location>
        <begin position="697"/>
        <end position="811"/>
    </location>
</feature>
<feature type="short sequence motif" description="RxxxRR motif" evidence="1">
    <location>
        <begin position="1041"/>
        <end position="1046"/>
    </location>
</feature>
<feature type="compositionally biased region" description="Basic and acidic residues" evidence="4">
    <location>
        <begin position="26"/>
        <end position="44"/>
    </location>
</feature>
<feature type="compositionally biased region" description="Polar residues" evidence="4">
    <location>
        <begin position="48"/>
        <end position="67"/>
    </location>
</feature>
<feature type="compositionally biased region" description="Basic and acidic residues" evidence="4">
    <location>
        <begin position="70"/>
        <end position="82"/>
    </location>
</feature>
<feature type="compositionally biased region" description="Polar residues" evidence="4">
    <location>
        <begin position="94"/>
        <end position="109"/>
    </location>
</feature>
<feature type="compositionally biased region" description="Low complexity" evidence="4">
    <location>
        <begin position="123"/>
        <end position="133"/>
    </location>
</feature>
<feature type="compositionally biased region" description="Basic and acidic residues" evidence="4">
    <location>
        <begin position="183"/>
        <end position="193"/>
    </location>
</feature>
<feature type="compositionally biased region" description="Basic and acidic residues" evidence="4">
    <location>
        <begin position="520"/>
        <end position="542"/>
    </location>
</feature>
<feature type="compositionally biased region" description="Basic and acidic residues" evidence="4">
    <location>
        <begin position="697"/>
        <end position="722"/>
    </location>
</feature>
<feature type="compositionally biased region" description="Acidic residues" evidence="4">
    <location>
        <begin position="730"/>
        <end position="741"/>
    </location>
</feature>
<feature type="compositionally biased region" description="Basic and acidic residues" evidence="4">
    <location>
        <begin position="746"/>
        <end position="759"/>
    </location>
</feature>
<feature type="binding site" evidence="3">
    <location>
        <position position="1194"/>
    </location>
    <ligand>
        <name>S-adenosyl-L-methionine</name>
        <dbReference type="ChEBI" id="CHEBI:59789"/>
    </ligand>
</feature>
<keyword id="KW-0156">Chromatin regulator</keyword>
<keyword id="KW-0158">Chromosome</keyword>
<keyword id="KW-0489">Methyltransferase</keyword>
<keyword id="KW-0539">Nucleus</keyword>
<keyword id="KW-1185">Reference proteome</keyword>
<keyword id="KW-0949">S-adenosyl-L-methionine</keyword>
<keyword id="KW-0808">Transferase</keyword>
<gene>
    <name type="primary">set1</name>
    <name type="ORF">AN5795</name>
</gene>
<accession>Q5B0Y5</accession>
<accession>C8VFD2</accession>
<name>SET1_EMENI</name>
<sequence>MSRSSAGFADFFPTAPSVIQQKRYQATRERQRSRPHLSREHADEEQIVTGSRTSGETVNGNSPQNLGQELRSDLNKSRKEVAEDGSASHGEANTPANNTSGPGTGSSNDTRLDTLTPLTNTESSPQNNPSPSQAKAPNGDEPDGFRQARANVSNSTMTPLHTPPTPTTHSLSQRVAIVKGSKLVHDPDRAPSKDKRKRPCYVDIVSDEQEGRLSDPRLSIQNYTRGAGCRQKTKYRPAPYVLRHWPYDPASTVGPGPPVQIVVTGFDPLTPLAPISTLFSSFGEIAEINNRTDPDTGRFLGICSVKYKDSASFHGSGPVSASLAAKNAFHECKKGQRIGNNRIKVEYDRDGQTSEKLASRAIAAQRIDSKIDMPVVGEPKSEAQVNKNEPPPTAPKGPSGRSFMRPSAVIPEGPRASFQKPAIPSLIEETPILNQIKRDPYIFIAHCYVPVLSSTLPHLKKRLKAFNWKDIRCDRTGYYIIFENSRRGEEETERCYKFCHMKLLFTYIMNMESQPYGNPHYERSPSPERMKQEQRQKAETERLKKEAELDIEEEKKQRALDLDPCTEVLAIVIKDLRDKLLEDVKSRIAAPALYDYLDPERHASRRKQLGIPDPEGIKRPMFRLDFDSRDSTPDPHAKFLNKRHPSGVSGLNILSALPRIRKAHRLDRTDVAFLDERRKQPLRRRNVRPLYHRLQQLHDAEDSDEEQHTPLSRDTDDQDSRPPSRIGSETESEDADEDAAEALDNSTERLDNEDRHSEIGDLEAAVQDYSPSRKRKRTSESPSHRKKQKESDDFSAVGEGTRTDDIPQVLDGVHKGTVSQGLSDSADESSRLDHNKVLLEELVEDIKTTHSEEPGIKTHHVQVRQSAENMVEGAEYGEAARHEVEWRVSNDEPRPIVDDDDSVVMDLDGWQDVVKDEEDLQFLRNILEKQPMSVIGNLSAWAWRQKEIKALNRPGDVGPTRQAASIEGYYVPNITGAARTEGRKRILESEKSKYLPHRIKVQKAREEREAKAKSDPQNAAAEAARIAAAKTISKSTSRSTRVNNRRLIADINAQKQALPSQGGDSDVLRFNQLKKRKKPVRFARSAIHNWGLYAEVNISANEMIIEYVGEKVRQQVADMRERRYLKSGIGSSYLFRIDENTVIDATKRGGIARFINHSCTPNCTAKIIKVDGSKRIVIYALRDIERDEELTYDYKFEREWDSDDRIPCLCGSAGCKGFLN</sequence>
<protein>
    <recommendedName>
        <fullName>Histone-lysine N-methyltransferase, H3 lysine-4 specific</fullName>
        <ecNumber evidence="1">2.1.1.354</ecNumber>
    </recommendedName>
    <alternativeName>
        <fullName>COMPASS component SET1</fullName>
    </alternativeName>
    <alternativeName>
        <fullName>SET domain-containing protein 1</fullName>
    </alternativeName>
</protein>
<organism>
    <name type="scientific">Emericella nidulans (strain FGSC A4 / ATCC 38163 / CBS 112.46 / NRRL 194 / M139)</name>
    <name type="common">Aspergillus nidulans</name>
    <dbReference type="NCBI Taxonomy" id="227321"/>
    <lineage>
        <taxon>Eukaryota</taxon>
        <taxon>Fungi</taxon>
        <taxon>Dikarya</taxon>
        <taxon>Ascomycota</taxon>
        <taxon>Pezizomycotina</taxon>
        <taxon>Eurotiomycetes</taxon>
        <taxon>Eurotiomycetidae</taxon>
        <taxon>Eurotiales</taxon>
        <taxon>Aspergillaceae</taxon>
        <taxon>Aspergillus</taxon>
        <taxon>Aspergillus subgen. Nidulantes</taxon>
    </lineage>
</organism>
<proteinExistence type="inferred from homology"/>
<evidence type="ECO:0000250" key="1">
    <source>
        <dbReference type="UniProtKB" id="P38827"/>
    </source>
</evidence>
<evidence type="ECO:0000255" key="2">
    <source>
        <dbReference type="PROSITE-ProRule" id="PRU00155"/>
    </source>
</evidence>
<evidence type="ECO:0000255" key="3">
    <source>
        <dbReference type="PROSITE-ProRule" id="PRU00190"/>
    </source>
</evidence>
<evidence type="ECO:0000256" key="4">
    <source>
        <dbReference type="SAM" id="MobiDB-lite"/>
    </source>
</evidence>
<evidence type="ECO:0000305" key="5"/>
<reference key="1">
    <citation type="journal article" date="2005" name="Nature">
        <title>Sequencing of Aspergillus nidulans and comparative analysis with A. fumigatus and A. oryzae.</title>
        <authorList>
            <person name="Galagan J.E."/>
            <person name="Calvo S.E."/>
            <person name="Cuomo C."/>
            <person name="Ma L.-J."/>
            <person name="Wortman J.R."/>
            <person name="Batzoglou S."/>
            <person name="Lee S.-I."/>
            <person name="Bastuerkmen M."/>
            <person name="Spevak C.C."/>
            <person name="Clutterbuck J."/>
            <person name="Kapitonov V."/>
            <person name="Jurka J."/>
            <person name="Scazzocchio C."/>
            <person name="Farman M.L."/>
            <person name="Butler J."/>
            <person name="Purcell S."/>
            <person name="Harris S."/>
            <person name="Braus G.H."/>
            <person name="Draht O."/>
            <person name="Busch S."/>
            <person name="D'Enfert C."/>
            <person name="Bouchier C."/>
            <person name="Goldman G.H."/>
            <person name="Bell-Pedersen D."/>
            <person name="Griffiths-Jones S."/>
            <person name="Doonan J.H."/>
            <person name="Yu J."/>
            <person name="Vienken K."/>
            <person name="Pain A."/>
            <person name="Freitag M."/>
            <person name="Selker E.U."/>
            <person name="Archer D.B."/>
            <person name="Penalva M.A."/>
            <person name="Oakley B.R."/>
            <person name="Momany M."/>
            <person name="Tanaka T."/>
            <person name="Kumagai T."/>
            <person name="Asai K."/>
            <person name="Machida M."/>
            <person name="Nierman W.C."/>
            <person name="Denning D.W."/>
            <person name="Caddick M.X."/>
            <person name="Hynes M."/>
            <person name="Paoletti M."/>
            <person name="Fischer R."/>
            <person name="Miller B.L."/>
            <person name="Dyer P.S."/>
            <person name="Sachs M.S."/>
            <person name="Osmani S.A."/>
            <person name="Birren B.W."/>
        </authorList>
    </citation>
    <scope>NUCLEOTIDE SEQUENCE [LARGE SCALE GENOMIC DNA]</scope>
    <source>
        <strain>FGSC A4 / ATCC 38163 / CBS 112.46 / NRRL 194 / M139</strain>
    </source>
</reference>
<reference key="2">
    <citation type="journal article" date="2009" name="Fungal Genet. Biol.">
        <title>The 2008 update of the Aspergillus nidulans genome annotation: a community effort.</title>
        <authorList>
            <person name="Wortman J.R."/>
            <person name="Gilsenan J.M."/>
            <person name="Joardar V."/>
            <person name="Deegan J."/>
            <person name="Clutterbuck J."/>
            <person name="Andersen M.R."/>
            <person name="Archer D."/>
            <person name="Bencina M."/>
            <person name="Braus G."/>
            <person name="Coutinho P."/>
            <person name="von Dohren H."/>
            <person name="Doonan J."/>
            <person name="Driessen A.J."/>
            <person name="Durek P."/>
            <person name="Espeso E."/>
            <person name="Fekete E."/>
            <person name="Flipphi M."/>
            <person name="Estrada C.G."/>
            <person name="Geysens S."/>
            <person name="Goldman G."/>
            <person name="de Groot P.W."/>
            <person name="Hansen K."/>
            <person name="Harris S.D."/>
            <person name="Heinekamp T."/>
            <person name="Helmstaedt K."/>
            <person name="Henrissat B."/>
            <person name="Hofmann G."/>
            <person name="Homan T."/>
            <person name="Horio T."/>
            <person name="Horiuchi H."/>
            <person name="James S."/>
            <person name="Jones M."/>
            <person name="Karaffa L."/>
            <person name="Karanyi Z."/>
            <person name="Kato M."/>
            <person name="Keller N."/>
            <person name="Kelly D.E."/>
            <person name="Kiel J.A."/>
            <person name="Kim J.M."/>
            <person name="van der Klei I.J."/>
            <person name="Klis F.M."/>
            <person name="Kovalchuk A."/>
            <person name="Krasevec N."/>
            <person name="Kubicek C.P."/>
            <person name="Liu B."/>
            <person name="Maccabe A."/>
            <person name="Meyer V."/>
            <person name="Mirabito P."/>
            <person name="Miskei M."/>
            <person name="Mos M."/>
            <person name="Mullins J."/>
            <person name="Nelson D.R."/>
            <person name="Nielsen J."/>
            <person name="Oakley B.R."/>
            <person name="Osmani S.A."/>
            <person name="Pakula T."/>
            <person name="Paszewski A."/>
            <person name="Paulsen I."/>
            <person name="Pilsyk S."/>
            <person name="Pocsi I."/>
            <person name="Punt P.J."/>
            <person name="Ram A.F."/>
            <person name="Ren Q."/>
            <person name="Robellet X."/>
            <person name="Robson G."/>
            <person name="Seiboth B."/>
            <person name="van Solingen P."/>
            <person name="Specht T."/>
            <person name="Sun J."/>
            <person name="Taheri-Talesh N."/>
            <person name="Takeshita N."/>
            <person name="Ussery D."/>
            <person name="vanKuyk P.A."/>
            <person name="Visser H."/>
            <person name="van de Vondervoort P.J."/>
            <person name="de Vries R.P."/>
            <person name="Walton J."/>
            <person name="Xiang X."/>
            <person name="Xiong Y."/>
            <person name="Zeng A.P."/>
            <person name="Brandt B.W."/>
            <person name="Cornell M.J."/>
            <person name="van den Hondel C.A."/>
            <person name="Visser J."/>
            <person name="Oliver S.G."/>
            <person name="Turner G."/>
        </authorList>
    </citation>
    <scope>GENOME REANNOTATION</scope>
    <source>
        <strain>FGSC A4 / ATCC 38163 / CBS 112.46 / NRRL 194 / M139</strain>
    </source>
</reference>